<proteinExistence type="evidence at transcript level"/>
<sequence>MARYRRHSRSRSRSRYRRRRRRRSRHHNRRRTYRRSRRHSRRRRGRRRGYSRRRYSRRGRRRY</sequence>
<dbReference type="EMBL" id="AF089882">
    <property type="protein sequence ID" value="AAD55341.1"/>
    <property type="molecule type" value="Genomic_DNA"/>
</dbReference>
<dbReference type="GO" id="GO:0000786">
    <property type="term" value="C:nucleosome"/>
    <property type="evidence" value="ECO:0007669"/>
    <property type="project" value="UniProtKB-KW"/>
</dbReference>
<dbReference type="GO" id="GO:0005634">
    <property type="term" value="C:nucleus"/>
    <property type="evidence" value="ECO:0007669"/>
    <property type="project" value="UniProtKB-SubCell"/>
</dbReference>
<dbReference type="GO" id="GO:0003677">
    <property type="term" value="F:DNA binding"/>
    <property type="evidence" value="ECO:0007669"/>
    <property type="project" value="UniProtKB-KW"/>
</dbReference>
<dbReference type="GO" id="GO:0030261">
    <property type="term" value="P:chromosome condensation"/>
    <property type="evidence" value="ECO:0007669"/>
    <property type="project" value="UniProtKB-KW"/>
</dbReference>
<dbReference type="GO" id="GO:0035092">
    <property type="term" value="P:sperm DNA condensation"/>
    <property type="evidence" value="ECO:0007669"/>
    <property type="project" value="InterPro"/>
</dbReference>
<dbReference type="InterPro" id="IPR000221">
    <property type="entry name" value="Protamine_P1"/>
</dbReference>
<dbReference type="PROSITE" id="PS00048">
    <property type="entry name" value="PROTAMINE_P1"/>
    <property type="match status" value="1"/>
</dbReference>
<feature type="chain" id="PRO_0000191572" description="Sperm protamine P1">
    <location>
        <begin position="1"/>
        <end position="63"/>
    </location>
</feature>
<feature type="region of interest" description="Disordered" evidence="2">
    <location>
        <begin position="1"/>
        <end position="63"/>
    </location>
</feature>
<comment type="function">
    <text evidence="1">Protamines substitute for histones in the chromatin of sperm during the haploid phase of spermatogenesis. They compact sperm DNA into a highly condensed, stable and inactive complex (By similarity).</text>
</comment>
<comment type="subcellular location">
    <subcellularLocation>
        <location evidence="1">Nucleus</location>
    </subcellularLocation>
    <subcellularLocation>
        <location evidence="1">Chromosome</location>
    </subcellularLocation>
</comment>
<comment type="tissue specificity">
    <text>Testis.</text>
</comment>
<comment type="similarity">
    <text evidence="3">Belongs to the protamine P1 family.</text>
</comment>
<evidence type="ECO:0000250" key="1"/>
<evidence type="ECO:0000256" key="2">
    <source>
        <dbReference type="SAM" id="MobiDB-lite"/>
    </source>
</evidence>
<evidence type="ECO:0000305" key="3"/>
<protein>
    <recommendedName>
        <fullName>Sperm protamine P1</fullName>
    </recommendedName>
</protein>
<organism>
    <name type="scientific">Sminthopsis ooldea</name>
    <name type="common">Ooldea dunnart</name>
    <dbReference type="NCBI Taxonomy" id="90765"/>
    <lineage>
        <taxon>Eukaryota</taxon>
        <taxon>Metazoa</taxon>
        <taxon>Chordata</taxon>
        <taxon>Craniata</taxon>
        <taxon>Vertebrata</taxon>
        <taxon>Euteleostomi</taxon>
        <taxon>Mammalia</taxon>
        <taxon>Metatheria</taxon>
        <taxon>Dasyuromorphia</taxon>
        <taxon>Dasyuridae</taxon>
        <taxon>Sminthopsis</taxon>
    </lineage>
</organism>
<keyword id="KW-0158">Chromosome</keyword>
<keyword id="KW-0217">Developmental protein</keyword>
<keyword id="KW-0221">Differentiation</keyword>
<keyword id="KW-0226">DNA condensation</keyword>
<keyword id="KW-0238">DNA-binding</keyword>
<keyword id="KW-0544">Nucleosome core</keyword>
<keyword id="KW-0539">Nucleus</keyword>
<keyword id="KW-0744">Spermatogenesis</keyword>
<name>HSP1_SMIOO</name>
<reference key="1">
    <citation type="journal article" date="1999" name="Mol. Phylogenet. Evol.">
        <title>Systematic relationships within the dasyurid marsupial tribe Sminthopsini -- a multigene approach.</title>
        <authorList>
            <person name="Blacket M.J."/>
            <person name="Krajewski C."/>
            <person name="Labrinidis A."/>
            <person name="Cambron B."/>
            <person name="Cooper S."/>
            <person name="Westerman M."/>
        </authorList>
    </citation>
    <scope>NUCLEOTIDE SEQUENCE [GENOMIC DNA]</scope>
</reference>
<gene>
    <name type="primary">PRM1</name>
</gene>
<accession>Q71UG1</accession>